<feature type="chain" id="PRO_0000298574" description="NAD(P)H-quinone oxidoreductase subunit I, chloroplastic">
    <location>
        <begin position="1"/>
        <end position="172"/>
    </location>
</feature>
<feature type="domain" description="4Fe-4S ferredoxin-type 1" evidence="1">
    <location>
        <begin position="55"/>
        <end position="84"/>
    </location>
</feature>
<feature type="domain" description="4Fe-4S ferredoxin-type 2" evidence="1">
    <location>
        <begin position="95"/>
        <end position="124"/>
    </location>
</feature>
<feature type="binding site" evidence="1">
    <location>
        <position position="64"/>
    </location>
    <ligand>
        <name>[4Fe-4S] cluster</name>
        <dbReference type="ChEBI" id="CHEBI:49883"/>
        <label>1</label>
    </ligand>
</feature>
<feature type="binding site" evidence="1">
    <location>
        <position position="67"/>
    </location>
    <ligand>
        <name>[4Fe-4S] cluster</name>
        <dbReference type="ChEBI" id="CHEBI:49883"/>
        <label>1</label>
    </ligand>
</feature>
<feature type="binding site" evidence="1">
    <location>
        <position position="70"/>
    </location>
    <ligand>
        <name>[4Fe-4S] cluster</name>
        <dbReference type="ChEBI" id="CHEBI:49883"/>
        <label>1</label>
    </ligand>
</feature>
<feature type="binding site" evidence="1">
    <location>
        <position position="74"/>
    </location>
    <ligand>
        <name>[4Fe-4S] cluster</name>
        <dbReference type="ChEBI" id="CHEBI:49883"/>
        <label>2</label>
    </ligand>
</feature>
<feature type="binding site" evidence="1">
    <location>
        <position position="104"/>
    </location>
    <ligand>
        <name>[4Fe-4S] cluster</name>
        <dbReference type="ChEBI" id="CHEBI:49883"/>
        <label>2</label>
    </ligand>
</feature>
<feature type="binding site" evidence="1">
    <location>
        <position position="107"/>
    </location>
    <ligand>
        <name>[4Fe-4S] cluster</name>
        <dbReference type="ChEBI" id="CHEBI:49883"/>
        <label>2</label>
    </ligand>
</feature>
<feature type="binding site" evidence="1">
    <location>
        <position position="110"/>
    </location>
    <ligand>
        <name>[4Fe-4S] cluster</name>
        <dbReference type="ChEBI" id="CHEBI:49883"/>
        <label>2</label>
    </ligand>
</feature>
<feature type="binding site" evidence="1">
    <location>
        <position position="114"/>
    </location>
    <ligand>
        <name>[4Fe-4S] cluster</name>
        <dbReference type="ChEBI" id="CHEBI:49883"/>
        <label>1</label>
    </ligand>
</feature>
<name>NDHI_CRUWA</name>
<protein>
    <recommendedName>
        <fullName evidence="1">NAD(P)H-quinone oxidoreductase subunit I, chloroplastic</fullName>
        <ecNumber evidence="1">7.1.1.-</ecNumber>
    </recommendedName>
    <alternativeName>
        <fullName evidence="1">NAD(P)H dehydrogenase subunit I</fullName>
        <shortName evidence="1">NDH subunit I</shortName>
    </alternativeName>
    <alternativeName>
        <fullName evidence="1">NADH-plastoquinone oxidoreductase subunit I</fullName>
    </alternativeName>
</protein>
<accession>A4QKY8</accession>
<keyword id="KW-0004">4Fe-4S</keyword>
<keyword id="KW-0150">Chloroplast</keyword>
<keyword id="KW-0408">Iron</keyword>
<keyword id="KW-0411">Iron-sulfur</keyword>
<keyword id="KW-0472">Membrane</keyword>
<keyword id="KW-0479">Metal-binding</keyword>
<keyword id="KW-0520">NAD</keyword>
<keyword id="KW-0521">NADP</keyword>
<keyword id="KW-0934">Plastid</keyword>
<keyword id="KW-0618">Plastoquinone</keyword>
<keyword id="KW-0874">Quinone</keyword>
<keyword id="KW-0677">Repeat</keyword>
<keyword id="KW-0793">Thylakoid</keyword>
<keyword id="KW-1278">Translocase</keyword>
<evidence type="ECO:0000255" key="1">
    <source>
        <dbReference type="HAMAP-Rule" id="MF_01351"/>
    </source>
</evidence>
<sequence>MLPMITGFMNYGQQTLRAARYIGQGFMITLSHTNRLPVTIQYPYEKLITSERFRGRIHFEFDKCIACEVCVRVCPIDLPVVDWKLETNIRKKRLLNYSIDFGICIFCGNCVEYCPTNCLSMTEEYEFSTYDRHELNYNQIALGRLPMSVIDDYTIRTILNSPQTKNGENPLI</sequence>
<dbReference type="EC" id="7.1.1.-" evidence="1"/>
<dbReference type="EMBL" id="AP009372">
    <property type="protein sequence ID" value="BAF50343.1"/>
    <property type="molecule type" value="Genomic_DNA"/>
</dbReference>
<dbReference type="RefSeq" id="YP_001123518.1">
    <property type="nucleotide sequence ID" value="NC_009271.1"/>
</dbReference>
<dbReference type="SMR" id="A4QKY8"/>
<dbReference type="GeneID" id="4962754"/>
<dbReference type="GO" id="GO:0009535">
    <property type="term" value="C:chloroplast thylakoid membrane"/>
    <property type="evidence" value="ECO:0007669"/>
    <property type="project" value="UniProtKB-SubCell"/>
</dbReference>
<dbReference type="GO" id="GO:0051539">
    <property type="term" value="F:4 iron, 4 sulfur cluster binding"/>
    <property type="evidence" value="ECO:0007669"/>
    <property type="project" value="UniProtKB-KW"/>
</dbReference>
<dbReference type="GO" id="GO:0005506">
    <property type="term" value="F:iron ion binding"/>
    <property type="evidence" value="ECO:0007669"/>
    <property type="project" value="UniProtKB-UniRule"/>
</dbReference>
<dbReference type="GO" id="GO:0008137">
    <property type="term" value="F:NADH dehydrogenase (ubiquinone) activity"/>
    <property type="evidence" value="ECO:0007669"/>
    <property type="project" value="InterPro"/>
</dbReference>
<dbReference type="GO" id="GO:0048038">
    <property type="term" value="F:quinone binding"/>
    <property type="evidence" value="ECO:0007669"/>
    <property type="project" value="UniProtKB-KW"/>
</dbReference>
<dbReference type="GO" id="GO:0019684">
    <property type="term" value="P:photosynthesis, light reaction"/>
    <property type="evidence" value="ECO:0007669"/>
    <property type="project" value="UniProtKB-UniRule"/>
</dbReference>
<dbReference type="FunFam" id="3.30.70.3270:FF:000006">
    <property type="entry name" value="NAD(P)H-quinone oxidoreductase subunit I, chloroplastic"/>
    <property type="match status" value="1"/>
</dbReference>
<dbReference type="Gene3D" id="3.30.70.3270">
    <property type="match status" value="1"/>
</dbReference>
<dbReference type="HAMAP" id="MF_01351">
    <property type="entry name" value="NDH1_NuoI"/>
    <property type="match status" value="1"/>
</dbReference>
<dbReference type="InterPro" id="IPR017896">
    <property type="entry name" value="4Fe4S_Fe-S-bd"/>
</dbReference>
<dbReference type="InterPro" id="IPR017900">
    <property type="entry name" value="4Fe4S_Fe_S_CS"/>
</dbReference>
<dbReference type="InterPro" id="IPR010226">
    <property type="entry name" value="NADH_quinone_OxRdtase_chainI"/>
</dbReference>
<dbReference type="InterPro" id="IPR004497">
    <property type="entry name" value="NDHI"/>
</dbReference>
<dbReference type="NCBIfam" id="TIGR00403">
    <property type="entry name" value="ndhI"/>
    <property type="match status" value="1"/>
</dbReference>
<dbReference type="NCBIfam" id="TIGR01971">
    <property type="entry name" value="NuoI"/>
    <property type="match status" value="1"/>
</dbReference>
<dbReference type="NCBIfam" id="NF004537">
    <property type="entry name" value="PRK05888.1-3"/>
    <property type="match status" value="1"/>
</dbReference>
<dbReference type="PANTHER" id="PTHR47275">
    <property type="entry name" value="NAD(P)H-QUINONE OXIDOREDUCTASE SUBUNIT I, CHLOROPLASTIC"/>
    <property type="match status" value="1"/>
</dbReference>
<dbReference type="PANTHER" id="PTHR47275:SF1">
    <property type="entry name" value="NAD(P)H-QUINONE OXIDOREDUCTASE SUBUNIT I, CHLOROPLASTIC"/>
    <property type="match status" value="1"/>
</dbReference>
<dbReference type="Pfam" id="PF13187">
    <property type="entry name" value="Fer4_9"/>
    <property type="match status" value="1"/>
</dbReference>
<dbReference type="SUPFAM" id="SSF54862">
    <property type="entry name" value="4Fe-4S ferredoxins"/>
    <property type="match status" value="1"/>
</dbReference>
<dbReference type="PROSITE" id="PS00198">
    <property type="entry name" value="4FE4S_FER_1"/>
    <property type="match status" value="2"/>
</dbReference>
<dbReference type="PROSITE" id="PS51379">
    <property type="entry name" value="4FE4S_FER_2"/>
    <property type="match status" value="2"/>
</dbReference>
<geneLocation type="chloroplast"/>
<gene>
    <name evidence="1" type="primary">ndhI</name>
</gene>
<reference key="1">
    <citation type="submission" date="2007-03" db="EMBL/GenBank/DDBJ databases">
        <title>Sequencing analysis of Crucihimalaya wallichii chloroplast DNA.</title>
        <authorList>
            <person name="Hosouchi T."/>
            <person name="Tsuruoka H."/>
            <person name="Kotani H."/>
        </authorList>
    </citation>
    <scope>NUCLEOTIDE SEQUENCE [LARGE SCALE GENOMIC DNA]</scope>
</reference>
<proteinExistence type="inferred from homology"/>
<comment type="function">
    <text evidence="1">NDH shuttles electrons from NAD(P)H:plastoquinone, via FMN and iron-sulfur (Fe-S) centers, to quinones in the photosynthetic chain and possibly in a chloroplast respiratory chain. The immediate electron acceptor for the enzyme in this species is believed to be plastoquinone. Couples the redox reaction to proton translocation, and thus conserves the redox energy in a proton gradient.</text>
</comment>
<comment type="catalytic activity">
    <reaction evidence="1">
        <text>a plastoquinone + NADH + (n+1) H(+)(in) = a plastoquinol + NAD(+) + n H(+)(out)</text>
        <dbReference type="Rhea" id="RHEA:42608"/>
        <dbReference type="Rhea" id="RHEA-COMP:9561"/>
        <dbReference type="Rhea" id="RHEA-COMP:9562"/>
        <dbReference type="ChEBI" id="CHEBI:15378"/>
        <dbReference type="ChEBI" id="CHEBI:17757"/>
        <dbReference type="ChEBI" id="CHEBI:57540"/>
        <dbReference type="ChEBI" id="CHEBI:57945"/>
        <dbReference type="ChEBI" id="CHEBI:62192"/>
    </reaction>
</comment>
<comment type="catalytic activity">
    <reaction evidence="1">
        <text>a plastoquinone + NADPH + (n+1) H(+)(in) = a plastoquinol + NADP(+) + n H(+)(out)</text>
        <dbReference type="Rhea" id="RHEA:42612"/>
        <dbReference type="Rhea" id="RHEA-COMP:9561"/>
        <dbReference type="Rhea" id="RHEA-COMP:9562"/>
        <dbReference type="ChEBI" id="CHEBI:15378"/>
        <dbReference type="ChEBI" id="CHEBI:17757"/>
        <dbReference type="ChEBI" id="CHEBI:57783"/>
        <dbReference type="ChEBI" id="CHEBI:58349"/>
        <dbReference type="ChEBI" id="CHEBI:62192"/>
    </reaction>
</comment>
<comment type="cofactor">
    <cofactor evidence="1">
        <name>[4Fe-4S] cluster</name>
        <dbReference type="ChEBI" id="CHEBI:49883"/>
    </cofactor>
    <text evidence="1">Binds 2 [4Fe-4S] clusters per subunit.</text>
</comment>
<comment type="subunit">
    <text evidence="1">NDH is composed of at least 16 different subunits, 5 of which are encoded in the nucleus.</text>
</comment>
<comment type="subcellular location">
    <subcellularLocation>
        <location evidence="1">Plastid</location>
        <location evidence="1">Chloroplast thylakoid membrane</location>
        <topology evidence="1">Peripheral membrane protein</topology>
    </subcellularLocation>
</comment>
<comment type="similarity">
    <text evidence="1">Belongs to the complex I 23 kDa subunit family.</text>
</comment>
<organism>
    <name type="scientific">Crucihimalaya wallichii</name>
    <name type="common">Rock-cress</name>
    <name type="synonym">Arabidopsis campestris</name>
    <dbReference type="NCBI Taxonomy" id="78192"/>
    <lineage>
        <taxon>Eukaryota</taxon>
        <taxon>Viridiplantae</taxon>
        <taxon>Streptophyta</taxon>
        <taxon>Embryophyta</taxon>
        <taxon>Tracheophyta</taxon>
        <taxon>Spermatophyta</taxon>
        <taxon>Magnoliopsida</taxon>
        <taxon>eudicotyledons</taxon>
        <taxon>Gunneridae</taxon>
        <taxon>Pentapetalae</taxon>
        <taxon>rosids</taxon>
        <taxon>malvids</taxon>
        <taxon>Brassicales</taxon>
        <taxon>Brassicaceae</taxon>
        <taxon>Crucihimalayeae</taxon>
        <taxon>Crucihimalaya</taxon>
    </lineage>
</organism>